<gene>
    <name evidence="1" type="primary">hscB</name>
    <name type="ordered locus">Pfl01_4609</name>
</gene>
<comment type="function">
    <text evidence="1">Co-chaperone involved in the maturation of iron-sulfur cluster-containing proteins. Seems to help targeting proteins to be folded toward HscA.</text>
</comment>
<comment type="subunit">
    <text evidence="1">Interacts with HscA and stimulates its ATPase activity.</text>
</comment>
<comment type="similarity">
    <text evidence="1">Belongs to the HscB family.</text>
</comment>
<keyword id="KW-0143">Chaperone</keyword>
<name>HSCB_PSEPF</name>
<organism>
    <name type="scientific">Pseudomonas fluorescens (strain Pf0-1)</name>
    <dbReference type="NCBI Taxonomy" id="205922"/>
    <lineage>
        <taxon>Bacteria</taxon>
        <taxon>Pseudomonadati</taxon>
        <taxon>Pseudomonadota</taxon>
        <taxon>Gammaproteobacteria</taxon>
        <taxon>Pseudomonadales</taxon>
        <taxon>Pseudomonadaceae</taxon>
        <taxon>Pseudomonas</taxon>
    </lineage>
</organism>
<accession>Q3K7A8</accession>
<reference key="1">
    <citation type="journal article" date="2009" name="Genome Biol.">
        <title>Genomic and genetic analyses of diversity and plant interactions of Pseudomonas fluorescens.</title>
        <authorList>
            <person name="Silby M.W."/>
            <person name="Cerdeno-Tarraga A.M."/>
            <person name="Vernikos G.S."/>
            <person name="Giddens S.R."/>
            <person name="Jackson R.W."/>
            <person name="Preston G.M."/>
            <person name="Zhang X.-X."/>
            <person name="Moon C.D."/>
            <person name="Gehrig S.M."/>
            <person name="Godfrey S.A.C."/>
            <person name="Knight C.G."/>
            <person name="Malone J.G."/>
            <person name="Robinson Z."/>
            <person name="Spiers A.J."/>
            <person name="Harris S."/>
            <person name="Challis G.L."/>
            <person name="Yaxley A.M."/>
            <person name="Harris D."/>
            <person name="Seeger K."/>
            <person name="Murphy L."/>
            <person name="Rutter S."/>
            <person name="Squares R."/>
            <person name="Quail M.A."/>
            <person name="Saunders E."/>
            <person name="Mavromatis K."/>
            <person name="Brettin T.S."/>
            <person name="Bentley S.D."/>
            <person name="Hothersall J."/>
            <person name="Stephens E."/>
            <person name="Thomas C.M."/>
            <person name="Parkhill J."/>
            <person name="Levy S.B."/>
            <person name="Rainey P.B."/>
            <person name="Thomson N.R."/>
        </authorList>
    </citation>
    <scope>NUCLEOTIDE SEQUENCE [LARGE SCALE GENOMIC DNA]</scope>
    <source>
        <strain>Pf0-1</strain>
    </source>
</reference>
<protein>
    <recommendedName>
        <fullName evidence="1">Co-chaperone protein HscB homolog</fullName>
    </recommendedName>
</protein>
<feature type="chain" id="PRO_1000083022" description="Co-chaperone protein HscB homolog">
    <location>
        <begin position="1"/>
        <end position="173"/>
    </location>
</feature>
<feature type="domain" description="J" evidence="1">
    <location>
        <begin position="5"/>
        <end position="77"/>
    </location>
</feature>
<evidence type="ECO:0000255" key="1">
    <source>
        <dbReference type="HAMAP-Rule" id="MF_00682"/>
    </source>
</evidence>
<proteinExistence type="inferred from homology"/>
<dbReference type="EMBL" id="CP000094">
    <property type="protein sequence ID" value="ABA76346.1"/>
    <property type="molecule type" value="Genomic_DNA"/>
</dbReference>
<dbReference type="RefSeq" id="WP_011335815.1">
    <property type="nucleotide sequence ID" value="NC_007492.2"/>
</dbReference>
<dbReference type="SMR" id="Q3K7A8"/>
<dbReference type="KEGG" id="pfo:Pfl01_4609"/>
<dbReference type="eggNOG" id="COG1076">
    <property type="taxonomic scope" value="Bacteria"/>
</dbReference>
<dbReference type="HOGENOM" id="CLU_068529_2_0_6"/>
<dbReference type="Proteomes" id="UP000002704">
    <property type="component" value="Chromosome"/>
</dbReference>
<dbReference type="GO" id="GO:1990230">
    <property type="term" value="C:iron-sulfur cluster transfer complex"/>
    <property type="evidence" value="ECO:0007669"/>
    <property type="project" value="TreeGrafter"/>
</dbReference>
<dbReference type="GO" id="GO:0001671">
    <property type="term" value="F:ATPase activator activity"/>
    <property type="evidence" value="ECO:0007669"/>
    <property type="project" value="InterPro"/>
</dbReference>
<dbReference type="GO" id="GO:0051087">
    <property type="term" value="F:protein-folding chaperone binding"/>
    <property type="evidence" value="ECO:0007669"/>
    <property type="project" value="InterPro"/>
</dbReference>
<dbReference type="GO" id="GO:0044571">
    <property type="term" value="P:[2Fe-2S] cluster assembly"/>
    <property type="evidence" value="ECO:0007669"/>
    <property type="project" value="InterPro"/>
</dbReference>
<dbReference type="GO" id="GO:0051259">
    <property type="term" value="P:protein complex oligomerization"/>
    <property type="evidence" value="ECO:0007669"/>
    <property type="project" value="InterPro"/>
</dbReference>
<dbReference type="GO" id="GO:0006457">
    <property type="term" value="P:protein folding"/>
    <property type="evidence" value="ECO:0007669"/>
    <property type="project" value="UniProtKB-UniRule"/>
</dbReference>
<dbReference type="CDD" id="cd06257">
    <property type="entry name" value="DnaJ"/>
    <property type="match status" value="1"/>
</dbReference>
<dbReference type="FunFam" id="1.20.1280.20:FF:000005">
    <property type="entry name" value="Co-chaperone protein HscB homolog"/>
    <property type="match status" value="1"/>
</dbReference>
<dbReference type="Gene3D" id="1.10.287.110">
    <property type="entry name" value="DnaJ domain"/>
    <property type="match status" value="1"/>
</dbReference>
<dbReference type="Gene3D" id="1.20.1280.20">
    <property type="entry name" value="HscB, C-terminal domain"/>
    <property type="match status" value="1"/>
</dbReference>
<dbReference type="HAMAP" id="MF_00682">
    <property type="entry name" value="HscB"/>
    <property type="match status" value="1"/>
</dbReference>
<dbReference type="InterPro" id="IPR001623">
    <property type="entry name" value="DnaJ_domain"/>
</dbReference>
<dbReference type="InterPro" id="IPR004640">
    <property type="entry name" value="HscB"/>
</dbReference>
<dbReference type="InterPro" id="IPR036386">
    <property type="entry name" value="HscB_C_sf"/>
</dbReference>
<dbReference type="InterPro" id="IPR009073">
    <property type="entry name" value="HscB_oligo_C"/>
</dbReference>
<dbReference type="InterPro" id="IPR036869">
    <property type="entry name" value="J_dom_sf"/>
</dbReference>
<dbReference type="NCBIfam" id="TIGR00714">
    <property type="entry name" value="hscB"/>
    <property type="match status" value="1"/>
</dbReference>
<dbReference type="NCBIfam" id="NF001420">
    <property type="entry name" value="PRK00294.1"/>
    <property type="match status" value="1"/>
</dbReference>
<dbReference type="PANTHER" id="PTHR14021">
    <property type="entry name" value="IRON-SULFUR CLUSTER CO-CHAPERONE PROTEIN HSCB"/>
    <property type="match status" value="1"/>
</dbReference>
<dbReference type="PANTHER" id="PTHR14021:SF15">
    <property type="entry name" value="IRON-SULFUR CLUSTER CO-CHAPERONE PROTEIN HSCB"/>
    <property type="match status" value="1"/>
</dbReference>
<dbReference type="Pfam" id="PF00226">
    <property type="entry name" value="DnaJ"/>
    <property type="match status" value="1"/>
</dbReference>
<dbReference type="Pfam" id="PF07743">
    <property type="entry name" value="HSCB_C"/>
    <property type="match status" value="1"/>
</dbReference>
<dbReference type="SMART" id="SM00271">
    <property type="entry name" value="DnaJ"/>
    <property type="match status" value="1"/>
</dbReference>
<dbReference type="SUPFAM" id="SSF46565">
    <property type="entry name" value="Chaperone J-domain"/>
    <property type="match status" value="1"/>
</dbReference>
<dbReference type="SUPFAM" id="SSF47144">
    <property type="entry name" value="HSC20 (HSCB), C-terminal oligomerisation domain"/>
    <property type="match status" value="1"/>
</dbReference>
<dbReference type="PROSITE" id="PS50076">
    <property type="entry name" value="DNAJ_2"/>
    <property type="match status" value="1"/>
</dbReference>
<sequence length="173" mass="20270">MGIPCHFALFELQPGFRLDLEQLATRYRELARGVHPDRFADASEREQRSALEQSARLNDAYQTLKSPAQRARYLLTISGHEVPMEVTVHDPEFLLQQMQWREELEDLQDSADLAGVAAFKRRLKTAQEELNESFAACWDDAAQREQAERLMRRMQFLDKLTYEVRQLEERLDD</sequence>